<gene>
    <name evidence="1" type="primary">ndhD</name>
</gene>
<accession>A1XG05</accession>
<feature type="chain" id="PRO_0000343295" description="NAD(P)H-quinone oxidoreductase chain 4, chloroplastic">
    <location>
        <begin position="1"/>
        <end position="500"/>
    </location>
</feature>
<feature type="transmembrane region" description="Helical" evidence="1">
    <location>
        <begin position="4"/>
        <end position="24"/>
    </location>
</feature>
<feature type="transmembrane region" description="Helical" evidence="1">
    <location>
        <begin position="37"/>
        <end position="57"/>
    </location>
</feature>
<feature type="transmembrane region" description="Helical" evidence="1">
    <location>
        <begin position="80"/>
        <end position="100"/>
    </location>
</feature>
<feature type="transmembrane region" description="Helical" evidence="1">
    <location>
        <begin position="113"/>
        <end position="130"/>
    </location>
</feature>
<feature type="transmembrane region" description="Helical" evidence="1">
    <location>
        <begin position="134"/>
        <end position="154"/>
    </location>
</feature>
<feature type="transmembrane region" description="Helical" evidence="1">
    <location>
        <begin position="167"/>
        <end position="187"/>
    </location>
</feature>
<feature type="transmembrane region" description="Helical" evidence="1">
    <location>
        <begin position="208"/>
        <end position="228"/>
    </location>
</feature>
<feature type="transmembrane region" description="Helical" evidence="1">
    <location>
        <begin position="242"/>
        <end position="262"/>
    </location>
</feature>
<feature type="transmembrane region" description="Helical" evidence="1">
    <location>
        <begin position="272"/>
        <end position="292"/>
    </location>
</feature>
<feature type="transmembrane region" description="Helical" evidence="1">
    <location>
        <begin position="305"/>
        <end position="325"/>
    </location>
</feature>
<feature type="transmembrane region" description="Helical" evidence="1">
    <location>
        <begin position="330"/>
        <end position="350"/>
    </location>
</feature>
<feature type="transmembrane region" description="Helical" evidence="1">
    <location>
        <begin position="386"/>
        <end position="406"/>
    </location>
</feature>
<feature type="transmembrane region" description="Helical" evidence="1">
    <location>
        <begin position="416"/>
        <end position="436"/>
    </location>
</feature>
<feature type="transmembrane region" description="Helical" evidence="1">
    <location>
        <begin position="462"/>
        <end position="482"/>
    </location>
</feature>
<sequence>MSDFYWLTIIVVLPISAGSLIALLPHRGNKVVRWYTICICLFELLLTTYVFCYHFQLDDPLIQLEEDFNWINLFDFHWRLGIDGLSIGPILLTGFITTLATSAARPVTRNSRLFHFLMLAMYSGQIGLFSSRDLLLFFIMWELELIPVYLLLSMWGGKKRLYSATKFILYTAGGSIFLLMGVLGMGLYGSNEPKLNFETLANQSYPVALEIIFYFGFLIAYAVKSPIIPLHTWLPDTHGEAHYSTCMLLAGILLKMGAYGLVRINMELLPHAHSIFSPWLMIVGTIQIIYAASTSLGQRNLKKRIAYSSVSHMGFIIIGISSITDAGLNGAILQIISHGFIGAALFFLAGTSYDRIRLRYLNEMGGIAILMPRIFTMFSSFSMASLALPGMSGFVAELVIFLGIITSPKYLVVSKILITFVMAIGMILTPIYSLSMSRQMFYGYRLFNVPNSYFVDSGPREIFILICILLPIIGIGIYPDFVLSLSVDKVEAILSNYFHG</sequence>
<organism>
    <name type="scientific">Nuphar advena</name>
    <name type="common">Common spatterdock</name>
    <name type="synonym">Nuphar lutea subsp. advena</name>
    <dbReference type="NCBI Taxonomy" id="77108"/>
    <lineage>
        <taxon>Eukaryota</taxon>
        <taxon>Viridiplantae</taxon>
        <taxon>Streptophyta</taxon>
        <taxon>Embryophyta</taxon>
        <taxon>Tracheophyta</taxon>
        <taxon>Spermatophyta</taxon>
        <taxon>Magnoliopsida</taxon>
        <taxon>Nymphaeales</taxon>
        <taxon>Nymphaeaceae</taxon>
        <taxon>Nuphar</taxon>
    </lineage>
</organism>
<proteinExistence type="inferred from homology"/>
<comment type="catalytic activity">
    <reaction evidence="1">
        <text>a plastoquinone + NADH + (n+1) H(+)(in) = a plastoquinol + NAD(+) + n H(+)(out)</text>
        <dbReference type="Rhea" id="RHEA:42608"/>
        <dbReference type="Rhea" id="RHEA-COMP:9561"/>
        <dbReference type="Rhea" id="RHEA-COMP:9562"/>
        <dbReference type="ChEBI" id="CHEBI:15378"/>
        <dbReference type="ChEBI" id="CHEBI:17757"/>
        <dbReference type="ChEBI" id="CHEBI:57540"/>
        <dbReference type="ChEBI" id="CHEBI:57945"/>
        <dbReference type="ChEBI" id="CHEBI:62192"/>
    </reaction>
</comment>
<comment type="catalytic activity">
    <reaction evidence="1">
        <text>a plastoquinone + NADPH + (n+1) H(+)(in) = a plastoquinol + NADP(+) + n H(+)(out)</text>
        <dbReference type="Rhea" id="RHEA:42612"/>
        <dbReference type="Rhea" id="RHEA-COMP:9561"/>
        <dbReference type="Rhea" id="RHEA-COMP:9562"/>
        <dbReference type="ChEBI" id="CHEBI:15378"/>
        <dbReference type="ChEBI" id="CHEBI:17757"/>
        <dbReference type="ChEBI" id="CHEBI:57783"/>
        <dbReference type="ChEBI" id="CHEBI:58349"/>
        <dbReference type="ChEBI" id="CHEBI:62192"/>
    </reaction>
</comment>
<comment type="subcellular location">
    <subcellularLocation>
        <location evidence="1">Plastid</location>
        <location evidence="1">Chloroplast thylakoid membrane</location>
        <topology evidence="1">Multi-pass membrane protein</topology>
    </subcellularLocation>
</comment>
<comment type="similarity">
    <text evidence="1">Belongs to the complex I subunit 4 family.</text>
</comment>
<dbReference type="EC" id="7.1.1.-" evidence="1"/>
<dbReference type="EMBL" id="DQ354691">
    <property type="protein sequence ID" value="ABC60509.2"/>
    <property type="molecule type" value="Genomic_DNA"/>
</dbReference>
<dbReference type="RefSeq" id="YP_001001584.2">
    <property type="nucleotide sequence ID" value="NC_008788.1"/>
</dbReference>
<dbReference type="SMR" id="A1XG05"/>
<dbReference type="GeneID" id="4699572"/>
<dbReference type="GO" id="GO:0009535">
    <property type="term" value="C:chloroplast thylakoid membrane"/>
    <property type="evidence" value="ECO:0007669"/>
    <property type="project" value="UniProtKB-SubCell"/>
</dbReference>
<dbReference type="GO" id="GO:0008137">
    <property type="term" value="F:NADH dehydrogenase (ubiquinone) activity"/>
    <property type="evidence" value="ECO:0007669"/>
    <property type="project" value="InterPro"/>
</dbReference>
<dbReference type="GO" id="GO:0048039">
    <property type="term" value="F:ubiquinone binding"/>
    <property type="evidence" value="ECO:0007669"/>
    <property type="project" value="TreeGrafter"/>
</dbReference>
<dbReference type="GO" id="GO:0042773">
    <property type="term" value="P:ATP synthesis coupled electron transport"/>
    <property type="evidence" value="ECO:0007669"/>
    <property type="project" value="InterPro"/>
</dbReference>
<dbReference type="GO" id="GO:0015990">
    <property type="term" value="P:electron transport coupled proton transport"/>
    <property type="evidence" value="ECO:0007669"/>
    <property type="project" value="TreeGrafter"/>
</dbReference>
<dbReference type="HAMAP" id="MF_00491">
    <property type="entry name" value="NDH1_NuoM"/>
    <property type="match status" value="1"/>
</dbReference>
<dbReference type="InterPro" id="IPR022997">
    <property type="entry name" value="NADH_Q_OxRdtase_chain4"/>
</dbReference>
<dbReference type="InterPro" id="IPR010227">
    <property type="entry name" value="NADH_Q_OxRdtase_chainM/4"/>
</dbReference>
<dbReference type="InterPro" id="IPR003918">
    <property type="entry name" value="NADH_UbQ_OxRdtase"/>
</dbReference>
<dbReference type="InterPro" id="IPR001750">
    <property type="entry name" value="ND/Mrp_TM"/>
</dbReference>
<dbReference type="NCBIfam" id="TIGR01972">
    <property type="entry name" value="NDH_I_M"/>
    <property type="match status" value="1"/>
</dbReference>
<dbReference type="PANTHER" id="PTHR43507:SF21">
    <property type="entry name" value="NAD(P)H-QUINONE OXIDOREDUCTASE CHAIN 4, CHLOROPLASTIC"/>
    <property type="match status" value="1"/>
</dbReference>
<dbReference type="PANTHER" id="PTHR43507">
    <property type="entry name" value="NADH-UBIQUINONE OXIDOREDUCTASE CHAIN 4"/>
    <property type="match status" value="1"/>
</dbReference>
<dbReference type="Pfam" id="PF00361">
    <property type="entry name" value="Proton_antipo_M"/>
    <property type="match status" value="1"/>
</dbReference>
<dbReference type="PRINTS" id="PR01437">
    <property type="entry name" value="NUOXDRDTASE4"/>
</dbReference>
<keyword id="KW-0150">Chloroplast</keyword>
<keyword id="KW-0472">Membrane</keyword>
<keyword id="KW-0520">NAD</keyword>
<keyword id="KW-0521">NADP</keyword>
<keyword id="KW-0934">Plastid</keyword>
<keyword id="KW-0618">Plastoquinone</keyword>
<keyword id="KW-0874">Quinone</keyword>
<keyword id="KW-0793">Thylakoid</keyword>
<keyword id="KW-1278">Translocase</keyword>
<keyword id="KW-0812">Transmembrane</keyword>
<keyword id="KW-1133">Transmembrane helix</keyword>
<protein>
    <recommendedName>
        <fullName evidence="1">NAD(P)H-quinone oxidoreductase chain 4, chloroplastic</fullName>
        <ecNumber evidence="1">7.1.1.-</ecNumber>
    </recommendedName>
    <alternativeName>
        <fullName evidence="1">NAD(P)H dehydrogenase, chain 4</fullName>
    </alternativeName>
    <alternativeName>
        <fullName evidence="1">NADH-plastoquinone oxidoreductase chain 4</fullName>
    </alternativeName>
</protein>
<name>NU4C_NUPAD</name>
<reference key="1">
    <citation type="journal article" date="2007" name="BMC Genomics">
        <title>Comparative chloroplast genomics: analyses including new sequences from the angiosperms Nuphar advena and Ranunculus macranthus.</title>
        <authorList>
            <person name="Raubeson L.A."/>
            <person name="Peery R."/>
            <person name="Chumley T.W."/>
            <person name="Dziubek C."/>
            <person name="Fourcade H.M."/>
            <person name="Boore J.L."/>
            <person name="Jansen R.K."/>
        </authorList>
    </citation>
    <scope>NUCLEOTIDE SEQUENCE [LARGE SCALE GENOMIC DNA]</scope>
</reference>
<evidence type="ECO:0000255" key="1">
    <source>
        <dbReference type="HAMAP-Rule" id="MF_00491"/>
    </source>
</evidence>
<geneLocation type="chloroplast"/>